<reference key="1">
    <citation type="submission" date="2006-10" db="EMBL/GenBank/DDBJ databases">
        <title>DNA sequences of macaque genes expressed in brain or testis and its evolutionary implications.</title>
        <authorList>
            <consortium name="International consortium for macaque cDNA sequencing and analysis"/>
        </authorList>
    </citation>
    <scope>NUCLEOTIDE SEQUENCE [LARGE SCALE MRNA]</scope>
    <source>
        <tissue>Testis</tissue>
    </source>
</reference>
<dbReference type="EMBL" id="AB168602">
    <property type="protein sequence ID" value="BAE00716.1"/>
    <property type="molecule type" value="mRNA"/>
</dbReference>
<dbReference type="RefSeq" id="NP_001272199.1">
    <property type="nucleotide sequence ID" value="NM_001285270.1"/>
</dbReference>
<dbReference type="SMR" id="Q4R856"/>
<dbReference type="STRING" id="9541.ENSMFAP00000019999"/>
<dbReference type="Ensembl" id="ENSMFAT00000070553.2">
    <property type="protein sequence ID" value="ENSMFAP00000019999.1"/>
    <property type="gene ID" value="ENSMFAG00000032968.2"/>
</dbReference>
<dbReference type="VEuPathDB" id="HostDB:ENSMFAG00000032968"/>
<dbReference type="eggNOG" id="ENOG502RXM9">
    <property type="taxonomic scope" value="Eukaryota"/>
</dbReference>
<dbReference type="GeneTree" id="ENSGT00390000018397"/>
<dbReference type="OMA" id="PAYECRS"/>
<dbReference type="Proteomes" id="UP000233100">
    <property type="component" value="Chromosome 16"/>
</dbReference>
<dbReference type="Bgee" id="ENSMFAG00000032968">
    <property type="expression patterns" value="Expressed in bone marrow and 9 other cell types or tissues"/>
</dbReference>
<dbReference type="GO" id="GO:0015030">
    <property type="term" value="C:Cajal body"/>
    <property type="evidence" value="ECO:0007669"/>
    <property type="project" value="UniProtKB-SubCell"/>
</dbReference>
<dbReference type="GO" id="GO:0005829">
    <property type="term" value="C:cytosol"/>
    <property type="evidence" value="ECO:0007669"/>
    <property type="project" value="Ensembl"/>
</dbReference>
<dbReference type="GO" id="GO:0005730">
    <property type="term" value="C:nucleolus"/>
    <property type="evidence" value="ECO:0007669"/>
    <property type="project" value="UniProtKB-SubCell"/>
</dbReference>
<dbReference type="GO" id="GO:0016605">
    <property type="term" value="C:PML body"/>
    <property type="evidence" value="ECO:0007669"/>
    <property type="project" value="UniProtKB-SubCell"/>
</dbReference>
<dbReference type="GO" id="GO:0003677">
    <property type="term" value="F:DNA binding"/>
    <property type="evidence" value="ECO:0007669"/>
    <property type="project" value="UniProtKB-KW"/>
</dbReference>
<dbReference type="GO" id="GO:0003723">
    <property type="term" value="F:RNA binding"/>
    <property type="evidence" value="ECO:0007669"/>
    <property type="project" value="UniProtKB-KW"/>
</dbReference>
<dbReference type="GO" id="GO:0006281">
    <property type="term" value="P:DNA repair"/>
    <property type="evidence" value="ECO:0007669"/>
    <property type="project" value="UniProtKB-ARBA"/>
</dbReference>
<dbReference type="CDD" id="cd12364">
    <property type="entry name" value="RRM_RDM1"/>
    <property type="match status" value="1"/>
</dbReference>
<dbReference type="Gene3D" id="3.30.70.330">
    <property type="match status" value="1"/>
</dbReference>
<dbReference type="InterPro" id="IPR012677">
    <property type="entry name" value="Nucleotide-bd_a/b_plait_sf"/>
</dbReference>
<dbReference type="InterPro" id="IPR041247">
    <property type="entry name" value="Rad52_fam"/>
</dbReference>
<dbReference type="InterPro" id="IPR035979">
    <property type="entry name" value="RBD_domain_sf"/>
</dbReference>
<dbReference type="InterPro" id="IPR040224">
    <property type="entry name" value="RDM1"/>
</dbReference>
<dbReference type="InterPro" id="IPR034200">
    <property type="entry name" value="RDM1_RRM"/>
</dbReference>
<dbReference type="InterPro" id="IPR000504">
    <property type="entry name" value="RRM_dom"/>
</dbReference>
<dbReference type="PANTHER" id="PTHR31164">
    <property type="entry name" value="RAD52 MOTIF-CONTAINING PROTEIN 1"/>
    <property type="match status" value="1"/>
</dbReference>
<dbReference type="PANTHER" id="PTHR31164:SF1">
    <property type="entry name" value="RAD52 MOTIF-CONTAINING PROTEIN 1"/>
    <property type="match status" value="1"/>
</dbReference>
<dbReference type="Pfam" id="PF04098">
    <property type="entry name" value="Rad52_Rad22"/>
    <property type="match status" value="1"/>
</dbReference>
<dbReference type="Pfam" id="PF00076">
    <property type="entry name" value="RRM_1"/>
    <property type="match status" value="1"/>
</dbReference>
<dbReference type="SUPFAM" id="SSF54768">
    <property type="entry name" value="dsRNA-binding domain-like"/>
    <property type="match status" value="1"/>
</dbReference>
<dbReference type="SUPFAM" id="SSF54928">
    <property type="entry name" value="RNA-binding domain, RBD"/>
    <property type="match status" value="1"/>
</dbReference>
<dbReference type="PROSITE" id="PS50102">
    <property type="entry name" value="RRM"/>
    <property type="match status" value="1"/>
</dbReference>
<proteinExistence type="evidence at transcript level"/>
<sequence length="284" mass="32269">MAELVPFAVPIESDKTLLVWELSSGPTAEALHHSLFTAFSQFGLLYSVRVFPNAAVAHPGFYAVIKFYSARAARRAQKACDRKQLFQKSPVKVRLGTRHKAVQHQALALNSSRCQELANYYFGFNGWSKRIIKLQELSDLEERENEDSMVPLPKQSLKFFCALEVMLPSYDCRSPGVGLVEKPVDKVEEGPLSFLMKRKTAQKLAIQKALSDAFQKLLIVVLESGKIAVEYRPSEDIIDVRCEEELHGLIQVHCSPWKQCGQEEEEYLSDFSLEEEEFRLPELD</sequence>
<name>RDM1_MACFA</name>
<accession>Q4R856</accession>
<organism>
    <name type="scientific">Macaca fascicularis</name>
    <name type="common">Crab-eating macaque</name>
    <name type="synonym">Cynomolgus monkey</name>
    <dbReference type="NCBI Taxonomy" id="9541"/>
    <lineage>
        <taxon>Eukaryota</taxon>
        <taxon>Metazoa</taxon>
        <taxon>Chordata</taxon>
        <taxon>Craniata</taxon>
        <taxon>Vertebrata</taxon>
        <taxon>Euteleostomi</taxon>
        <taxon>Mammalia</taxon>
        <taxon>Eutheria</taxon>
        <taxon>Euarchontoglires</taxon>
        <taxon>Primates</taxon>
        <taxon>Haplorrhini</taxon>
        <taxon>Catarrhini</taxon>
        <taxon>Cercopithecidae</taxon>
        <taxon>Cercopithecinae</taxon>
        <taxon>Macaca</taxon>
    </lineage>
</organism>
<gene>
    <name type="primary">RDM1</name>
    <name type="ORF">QtsA-13416</name>
</gene>
<comment type="function">
    <text evidence="1">May confer resistance to the antitumor agent cisplatin. Binds to DNA and RNA (By similarity).</text>
</comment>
<comment type="subunit">
    <text evidence="1">Homodimer.</text>
</comment>
<comment type="subcellular location">
    <subcellularLocation>
        <location>Nucleus</location>
    </subcellularLocation>
    <subcellularLocation>
        <location>Cytoplasm</location>
    </subcellularLocation>
    <subcellularLocation>
        <location>Nucleus</location>
        <location>Nucleolus</location>
    </subcellularLocation>
    <subcellularLocation>
        <location>Nucleus</location>
        <location>Cajal body</location>
    </subcellularLocation>
    <subcellularLocation>
        <location>Nucleus</location>
        <location>PML body</location>
    </subcellularLocation>
    <text evidence="1">After treatment with proteasomal inhibitors and mild heat-shock stress is relocalized to the nucleolus as dot-like or irregular subnuclear structures. Colocalized with nuclear promyelocytic leukemia (PML) and Cajal bodies (CB); this association with nuclear bodies is enhanced in response to proteotoxic stress. Relocalized in nucleolar caps during transcriptional arrest (By similarity).</text>
</comment>
<comment type="domain">
    <text evidence="1">C-terminal half contains cytoplasmic retention domains as well as determinants involved in its stress-induced nucleolar accumulation.</text>
</comment>
<keyword id="KW-0963">Cytoplasm</keyword>
<keyword id="KW-0238">DNA-binding</keyword>
<keyword id="KW-0539">Nucleus</keyword>
<keyword id="KW-1185">Reference proteome</keyword>
<keyword id="KW-0694">RNA-binding</keyword>
<evidence type="ECO:0000250" key="1"/>
<evidence type="ECO:0000255" key="2">
    <source>
        <dbReference type="PROSITE-ProRule" id="PRU00176"/>
    </source>
</evidence>
<feature type="chain" id="PRO_0000299529" description="RAD52 motif-containing protein 1">
    <location>
        <begin position="1"/>
        <end position="284"/>
    </location>
</feature>
<feature type="domain" description="RRM" evidence="2">
    <location>
        <begin position="15"/>
        <end position="98"/>
    </location>
</feature>
<feature type="region of interest" description="Necessary for nuclear localization and for nucleolar accumulation in response to heat shock" evidence="1">
    <location>
        <begin position="1"/>
        <end position="92"/>
    </location>
</feature>
<feature type="region of interest" description="Necessary for nuclear and nucleolar localization" evidence="1">
    <location>
        <begin position="90"/>
        <end position="133"/>
    </location>
</feature>
<protein>
    <recommendedName>
        <fullName>RAD52 motif-containing protein 1</fullName>
    </recommendedName>
</protein>